<proteinExistence type="evidence at protein level"/>
<comment type="function">
    <text evidence="5">Snake venom zinc metalloprotease that has fibrinogenolytic and hemorrhagic activities in mouse and rats. Hydrolyzes the Aalpha-chain (FGA) and more slowly the Bbeta-chain of fibrinogen (FGB), without affecting the gamma-chain. Its hemorrhagic activity results of its involvement in cleavage of basal membrane components (nidogen and fibronectin but not laminin) and depletion of fibrinogen, prothrombin (F2) and factor X (F10) in blood circulation. Also possess potent azocaseinolytic activity and cleaves insulin B-chain, hydrolyzing it at positions Gln(4)-His(5), His(10)-Leu(11) and Tyr(16)-Leu(17).</text>
</comment>
<comment type="cofactor">
    <cofactor evidence="1">
        <name>Zn(2+)</name>
        <dbReference type="ChEBI" id="CHEBI:29105"/>
    </cofactor>
    <text evidence="1">Binds 1 zinc ion per subunit.</text>
</comment>
<comment type="activity regulation">
    <text evidence="5">Inhibited by EDTA, DTT and zinc ions. Partially inhibited by L-cysteine. Not inhibited by 2-propanol or PMSF. Activity is enhanced by calcium or magnesium ions.</text>
</comment>
<comment type="subunit">
    <text evidence="5">Heterodimer; disulfide-linked.</text>
</comment>
<comment type="subcellular location">
    <subcellularLocation>
        <location>Secreted</location>
    </subcellularLocation>
</comment>
<comment type="tissue specificity">
    <text evidence="5">Expressed by the venom gland.</text>
</comment>
<comment type="PTM">
    <text>The N-terminus is blocked.</text>
</comment>
<comment type="PTM">
    <text evidence="5">N-glycosylated.</text>
</comment>
<comment type="mass spectrometry">
    <text>Monomer.</text>
</comment>
<comment type="miscellaneous">
    <text evidence="7">The hemorrhagic activity of the whole venom is completely neutralized by an antiserum against this metalloproteinase.</text>
</comment>
<comment type="similarity">
    <text evidence="6">Belongs to the venom metalloproteinase (M12B) family. P-III subfamily. P-IIIc sub-subfamily.</text>
</comment>
<sequence>KSAAXVTLDLFGDWRAKRHDNAQLLTGINLNGQTLGIAFMSKXSVGLIQDYXKSYLLVASVMAHELGHNLGMEHDDGNCICPAKCIDNKPLRTDIVSPAVCGNYFVELTPGSQCADGVCCDQCRKAGVTVAPDLCFDYNQLGTEDKFTHSPDDPDYGMVDLGTKCADGKVCNSNRQCVDVNTAY</sequence>
<name>VM3A_VIPAA</name>
<feature type="chain" id="PRO_0000415928" description="Zinc metalloproteinase-disintegrin-like ammodytagin">
    <location>
        <begin position="1" status="less than"/>
        <end position="184"/>
    </location>
</feature>
<feature type="domain" description="Peptidase M12B" evidence="3">
    <location>
        <begin position="1" status="less than"/>
        <end position="90"/>
    </location>
</feature>
<feature type="domain" description="Disintegrin" evidence="2">
    <location>
        <begin position="98"/>
        <end position="124" status="greater than"/>
    </location>
</feature>
<feature type="active site" evidence="3 4">
    <location>
        <position position="65"/>
    </location>
</feature>
<feature type="binding site" evidence="1">
    <location>
        <position position="20"/>
    </location>
    <ligand>
        <name>Ca(2+)</name>
        <dbReference type="ChEBI" id="CHEBI:29108"/>
        <label>1</label>
    </ligand>
</feature>
<feature type="binding site" evidence="1">
    <location>
        <position position="64"/>
    </location>
    <ligand>
        <name>Zn(2+)</name>
        <dbReference type="ChEBI" id="CHEBI:29105"/>
        <note>catalytic</note>
    </ligand>
</feature>
<feature type="binding site" evidence="1">
    <location>
        <position position="68"/>
    </location>
    <ligand>
        <name>Zn(2+)</name>
        <dbReference type="ChEBI" id="CHEBI:29105"/>
        <note>catalytic</note>
    </ligand>
</feature>
<feature type="binding site" evidence="1">
    <location>
        <position position="74"/>
    </location>
    <ligand>
        <name>Zn(2+)</name>
        <dbReference type="ChEBI" id="CHEBI:29105"/>
        <note>catalytic</note>
    </ligand>
</feature>
<feature type="binding site" evidence="1">
    <location>
        <position position="88"/>
    </location>
    <ligand>
        <name>Ca(2+)</name>
        <dbReference type="ChEBI" id="CHEBI:29108"/>
        <label>1</label>
    </ligand>
</feature>
<feature type="binding site" evidence="1">
    <location>
        <position position="100"/>
    </location>
    <ligand>
        <name>Ca(2+)</name>
        <dbReference type="ChEBI" id="CHEBI:29108"/>
        <label>2</label>
    </ligand>
</feature>
<feature type="binding site" evidence="1">
    <location>
        <position position="103"/>
    </location>
    <ligand>
        <name>Ca(2+)</name>
        <dbReference type="ChEBI" id="CHEBI:29108"/>
        <label>2</label>
    </ligand>
</feature>
<feature type="binding site" evidence="1">
    <location>
        <position position="105"/>
    </location>
    <ligand>
        <name>Ca(2+)</name>
        <dbReference type="ChEBI" id="CHEBI:29108"/>
        <label>2</label>
    </ligand>
</feature>
<feature type="binding site" evidence="1">
    <location>
        <position position="107"/>
    </location>
    <ligand>
        <name>Ca(2+)</name>
        <dbReference type="ChEBI" id="CHEBI:29108"/>
        <label>2</label>
    </ligand>
</feature>
<feature type="disulfide bond" evidence="1">
    <location>
        <begin position="114"/>
        <end position="120"/>
    </location>
</feature>
<feature type="disulfide bond" evidence="1">
    <location>
        <begin position="165"/>
        <end position="177"/>
    </location>
</feature>
<feature type="unsure residue" description="Assigned by comparison with homologs">
    <location>
        <position position="64"/>
    </location>
</feature>
<feature type="unsure residue" description="Assigned by comparison with homologs">
    <location>
        <position position="79"/>
    </location>
</feature>
<feature type="unsure residue" description="Assigned by comparison with homologs">
    <location>
        <position position="81"/>
    </location>
</feature>
<feature type="unsure residue" description="Assigned by comparison with homologs">
    <location>
        <position position="85"/>
    </location>
</feature>
<feature type="unsure residue" description="Assigned by comparison with homologs">
    <location>
        <position position="101"/>
    </location>
</feature>
<feature type="unsure residue" description="Assigned by comparison with homologs">
    <location>
        <position position="135"/>
    </location>
</feature>
<feature type="unsure residue" description="Assigned by comparison with homologs">
    <location>
        <position position="177"/>
    </location>
</feature>
<feature type="non-consecutive residues" evidence="6">
    <location>
        <begin position="16"/>
        <end position="17"/>
    </location>
</feature>
<feature type="non-consecutive residues" evidence="6">
    <location>
        <begin position="41"/>
        <end position="42"/>
    </location>
</feature>
<feature type="non-consecutive residues" evidence="6">
    <location>
        <begin position="83"/>
        <end position="84"/>
    </location>
</feature>
<feature type="non-consecutive residues" evidence="6">
    <location>
        <begin position="107"/>
        <end position="108"/>
    </location>
</feature>
<feature type="non-consecutive residues" evidence="6">
    <location>
        <begin position="124"/>
        <end position="125"/>
    </location>
</feature>
<feature type="non-consecutive residues" evidence="6">
    <location>
        <begin position="145"/>
        <end position="146"/>
    </location>
</feature>
<feature type="non-terminal residue">
    <location>
        <position position="1"/>
    </location>
</feature>
<organism>
    <name type="scientific">Vipera ammodytes ammodytes</name>
    <name type="common">Western sand viper</name>
    <dbReference type="NCBI Taxonomy" id="8705"/>
    <lineage>
        <taxon>Eukaryota</taxon>
        <taxon>Metazoa</taxon>
        <taxon>Chordata</taxon>
        <taxon>Craniata</taxon>
        <taxon>Vertebrata</taxon>
        <taxon>Euteleostomi</taxon>
        <taxon>Lepidosauria</taxon>
        <taxon>Squamata</taxon>
        <taxon>Bifurcata</taxon>
        <taxon>Unidentata</taxon>
        <taxon>Episquamata</taxon>
        <taxon>Toxicofera</taxon>
        <taxon>Serpentes</taxon>
        <taxon>Colubroidea</taxon>
        <taxon>Viperidae</taxon>
        <taxon>Viperinae</taxon>
        <taxon>Vipera</taxon>
    </lineage>
</organism>
<reference key="1">
    <citation type="journal article" date="2011" name="Toxicon">
        <title>Ammodytagin, a heterodimeric metalloproteinase from Vipera ammodytes ammodytes venom with strong hemorrhagic activity.</title>
        <authorList>
            <person name="Kurtovic T."/>
            <person name="Brgles M."/>
            <person name="Leonardi A."/>
            <person name="Balija M.L."/>
            <person name="Krizaj I."/>
            <person name="Allmaier G."/>
            <person name="Marchetti-Deschmann M."/>
            <person name="Halassy B."/>
        </authorList>
    </citation>
    <scope>PROTEIN SEQUENCE</scope>
    <scope>FUNCTION</scope>
    <scope>CATALYTIC ACTIVITY</scope>
    <scope>ACTIVITY REGULATION</scope>
    <scope>SUBUNIT</scope>
    <scope>TISSUE SPECIFICITY</scope>
    <scope>GLYCOSYLATION</scope>
    <scope>BLOCKAGE OF N-TERMINUS</scope>
    <scope>MASS SPECTROMETRY</scope>
    <source>
        <tissue>Venom</tissue>
    </source>
</reference>
<dbReference type="EC" id="3.4.24.-"/>
<dbReference type="BRENDA" id="3.4.24.B38">
    <property type="organism ID" value="10997"/>
</dbReference>
<dbReference type="GO" id="GO:0005576">
    <property type="term" value="C:extracellular region"/>
    <property type="evidence" value="ECO:0007669"/>
    <property type="project" value="UniProtKB-SubCell"/>
</dbReference>
<dbReference type="GO" id="GO:0005886">
    <property type="term" value="C:plasma membrane"/>
    <property type="evidence" value="ECO:0007669"/>
    <property type="project" value="TreeGrafter"/>
</dbReference>
<dbReference type="GO" id="GO:0046872">
    <property type="term" value="F:metal ion binding"/>
    <property type="evidence" value="ECO:0007669"/>
    <property type="project" value="UniProtKB-KW"/>
</dbReference>
<dbReference type="GO" id="GO:0004222">
    <property type="term" value="F:metalloendopeptidase activity"/>
    <property type="evidence" value="ECO:0007669"/>
    <property type="project" value="InterPro"/>
</dbReference>
<dbReference type="GO" id="GO:0090729">
    <property type="term" value="F:toxin activity"/>
    <property type="evidence" value="ECO:0007669"/>
    <property type="project" value="UniProtKB-KW"/>
</dbReference>
<dbReference type="GO" id="GO:0006508">
    <property type="term" value="P:proteolysis"/>
    <property type="evidence" value="ECO:0007669"/>
    <property type="project" value="UniProtKB-KW"/>
</dbReference>
<dbReference type="Gene3D" id="3.40.390.10">
    <property type="entry name" value="Collagenase (Catalytic Domain)"/>
    <property type="match status" value="1"/>
</dbReference>
<dbReference type="InterPro" id="IPR006586">
    <property type="entry name" value="ADAM_Cys-rich"/>
</dbReference>
<dbReference type="InterPro" id="IPR024079">
    <property type="entry name" value="MetalloPept_cat_dom_sf"/>
</dbReference>
<dbReference type="InterPro" id="IPR001590">
    <property type="entry name" value="Peptidase_M12B"/>
</dbReference>
<dbReference type="PANTHER" id="PTHR11905">
    <property type="entry name" value="ADAM A DISINTEGRIN AND METALLOPROTEASE DOMAIN"/>
    <property type="match status" value="1"/>
</dbReference>
<dbReference type="PANTHER" id="PTHR11905:SF32">
    <property type="entry name" value="DISINTEGRIN AND METALLOPROTEINASE DOMAIN-CONTAINING PROTEIN 28"/>
    <property type="match status" value="1"/>
</dbReference>
<dbReference type="Pfam" id="PF01421">
    <property type="entry name" value="Reprolysin"/>
    <property type="match status" value="1"/>
</dbReference>
<dbReference type="SMART" id="SM00608">
    <property type="entry name" value="ACR"/>
    <property type="match status" value="1"/>
</dbReference>
<dbReference type="SUPFAM" id="SSF55486">
    <property type="entry name" value="Metalloproteases ('zincins'), catalytic domain"/>
    <property type="match status" value="1"/>
</dbReference>
<dbReference type="PROSITE" id="PS50215">
    <property type="entry name" value="ADAM_MEPRO"/>
    <property type="match status" value="1"/>
</dbReference>
<dbReference type="PROSITE" id="PS00142">
    <property type="entry name" value="ZINC_PROTEASE"/>
    <property type="match status" value="1"/>
</dbReference>
<evidence type="ECO:0000250" key="1"/>
<evidence type="ECO:0000255" key="2">
    <source>
        <dbReference type="PROSITE-ProRule" id="PRU00068"/>
    </source>
</evidence>
<evidence type="ECO:0000255" key="3">
    <source>
        <dbReference type="PROSITE-ProRule" id="PRU00276"/>
    </source>
</evidence>
<evidence type="ECO:0000255" key="4">
    <source>
        <dbReference type="PROSITE-ProRule" id="PRU10095"/>
    </source>
</evidence>
<evidence type="ECO:0000269" key="5">
    <source>
    </source>
</evidence>
<evidence type="ECO:0000305" key="6"/>
<evidence type="ECO:0000305" key="7">
    <source>
    </source>
</evidence>
<keyword id="KW-0106">Calcium</keyword>
<keyword id="KW-0903">Direct protein sequencing</keyword>
<keyword id="KW-1015">Disulfide bond</keyword>
<keyword id="KW-1206">Fibrinogenolytic toxin</keyword>
<keyword id="KW-0325">Glycoprotein</keyword>
<keyword id="KW-1200">Hemorrhagic toxin</keyword>
<keyword id="KW-1199">Hemostasis impairing toxin</keyword>
<keyword id="KW-0378">Hydrolase</keyword>
<keyword id="KW-0479">Metal-binding</keyword>
<keyword id="KW-0482">Metalloprotease</keyword>
<keyword id="KW-0645">Protease</keyword>
<keyword id="KW-0964">Secreted</keyword>
<keyword id="KW-0800">Toxin</keyword>
<keyword id="KW-0862">Zinc</keyword>
<protein>
    <recommendedName>
        <fullName>Zinc metalloproteinase-disintegrin-like ammodytagin</fullName>
        <ecNumber>3.4.24.-</ecNumber>
    </recommendedName>
    <alternativeName>
        <fullName>Snake venom metalloproteinase</fullName>
        <shortName>SVMP</shortName>
    </alternativeName>
</protein>
<accession>P0DJE2</accession>
<accession>B3A0S6</accession>